<feature type="chain" id="PRO_0000069385" description="D(2) dopamine receptor">
    <location>
        <begin position="1"/>
        <end position="443"/>
    </location>
</feature>
<feature type="topological domain" description="Extracellular" evidence="1">
    <location>
        <begin position="1"/>
        <end position="37"/>
    </location>
</feature>
<feature type="transmembrane region" description="Helical; Name=1" evidence="1">
    <location>
        <begin position="38"/>
        <end position="60"/>
    </location>
</feature>
<feature type="topological domain" description="Cytoplasmic" evidence="1">
    <location>
        <begin position="61"/>
        <end position="70"/>
    </location>
</feature>
<feature type="transmembrane region" description="Helical; Name=2" evidence="1">
    <location>
        <begin position="71"/>
        <end position="93"/>
    </location>
</feature>
<feature type="topological domain" description="Extracellular" evidence="1">
    <location>
        <begin position="94"/>
        <end position="108"/>
    </location>
</feature>
<feature type="transmembrane region" description="Helical; Name=3" evidence="1">
    <location>
        <begin position="109"/>
        <end position="130"/>
    </location>
</feature>
<feature type="topological domain" description="Cytoplasmic" evidence="1">
    <location>
        <begin position="131"/>
        <end position="151"/>
    </location>
</feature>
<feature type="transmembrane region" description="Helical; Name=4" evidence="1">
    <location>
        <begin position="152"/>
        <end position="172"/>
    </location>
</feature>
<feature type="topological domain" description="Extracellular" evidence="1">
    <location>
        <begin position="173"/>
        <end position="188"/>
    </location>
</feature>
<feature type="transmembrane region" description="Helical; Name=5" evidence="1">
    <location>
        <begin position="189"/>
        <end position="213"/>
    </location>
</feature>
<feature type="topological domain" description="Cytoplasmic" evidence="1">
    <location>
        <begin position="214"/>
        <end position="373"/>
    </location>
</feature>
<feature type="transmembrane region" description="Helical; Name=6" evidence="1">
    <location>
        <begin position="374"/>
        <end position="395"/>
    </location>
</feature>
<feature type="topological domain" description="Extracellular" evidence="1">
    <location>
        <begin position="396"/>
        <end position="409"/>
    </location>
</feature>
<feature type="transmembrane region" description="Helical; Name=7" evidence="1">
    <location>
        <begin position="410"/>
        <end position="431"/>
    </location>
</feature>
<feature type="topological domain" description="Cytoplasmic" evidence="1">
    <location>
        <begin position="432"/>
        <end position="443"/>
    </location>
</feature>
<feature type="region of interest" description="Interaction with PPP1R9B" evidence="1">
    <location>
        <begin position="211"/>
        <end position="373"/>
    </location>
</feature>
<feature type="region of interest" description="Disordered" evidence="7">
    <location>
        <begin position="282"/>
        <end position="332"/>
    </location>
</feature>
<feature type="compositionally biased region" description="Basic and acidic residues" evidence="7">
    <location>
        <begin position="323"/>
        <end position="332"/>
    </location>
</feature>
<feature type="site" description="Important for receptor activation" evidence="1">
    <location>
        <position position="194"/>
    </location>
</feature>
<feature type="site" description="Important for receptor activation" evidence="1">
    <location>
        <position position="197"/>
    </location>
</feature>
<feature type="lipid moiety-binding region" description="S-palmitoyl cysteine" evidence="2">
    <location>
        <position position="443"/>
    </location>
</feature>
<feature type="glycosylation site" description="N-linked (GlcNAc...) asparagine" evidence="5">
    <location>
        <position position="5"/>
    </location>
</feature>
<feature type="glycosylation site" description="N-linked (GlcNAc...) asparagine" evidence="5">
    <location>
        <position position="17"/>
    </location>
</feature>
<feature type="glycosylation site" description="N-linked (GlcNAc...) asparagine" evidence="5">
    <location>
        <position position="23"/>
    </location>
</feature>
<feature type="disulfide bond" evidence="6">
    <location>
        <begin position="107"/>
        <end position="182"/>
    </location>
</feature>
<feature type="disulfide bond" evidence="6">
    <location>
        <begin position="399"/>
        <end position="401"/>
    </location>
</feature>
<dbReference type="EMBL" id="AF293962">
    <property type="protein sequence ID" value="AAG34494.1"/>
    <property type="molecule type" value="Genomic_DNA"/>
</dbReference>
<dbReference type="EMBL" id="AF293963">
    <property type="protein sequence ID" value="AAG34496.1"/>
    <property type="molecule type" value="mRNA"/>
</dbReference>
<dbReference type="RefSeq" id="NP_001003110.1">
    <property type="nucleotide sequence ID" value="NM_001003110.1"/>
</dbReference>
<dbReference type="SMR" id="Q9GJU1"/>
<dbReference type="FunCoup" id="Q9GJU1">
    <property type="interactions" value="291"/>
</dbReference>
<dbReference type="STRING" id="9615.ENSCAFP00000020466"/>
<dbReference type="BindingDB" id="Q9GJU1"/>
<dbReference type="ChEMBL" id="CHEMBL2703"/>
<dbReference type="DrugCentral" id="Q9GJU1"/>
<dbReference type="GlyCosmos" id="Q9GJU1">
    <property type="glycosylation" value="3 sites, No reported glycans"/>
</dbReference>
<dbReference type="PaxDb" id="9612-ENSCAFP00000020469"/>
<dbReference type="GeneID" id="403701"/>
<dbReference type="KEGG" id="cfa:403701"/>
<dbReference type="CTD" id="1813"/>
<dbReference type="eggNOG" id="KOG3656">
    <property type="taxonomic scope" value="Eukaryota"/>
</dbReference>
<dbReference type="InParanoid" id="Q9GJU1"/>
<dbReference type="OrthoDB" id="10034726at2759"/>
<dbReference type="PRO" id="PR:Q9GJU1"/>
<dbReference type="Proteomes" id="UP000002254">
    <property type="component" value="Unplaced"/>
</dbReference>
<dbReference type="Proteomes" id="UP000694429">
    <property type="component" value="Unplaced"/>
</dbReference>
<dbReference type="Proteomes" id="UP000694542">
    <property type="component" value="Unplaced"/>
</dbReference>
<dbReference type="Proteomes" id="UP000805418">
    <property type="component" value="Unplaced"/>
</dbReference>
<dbReference type="GO" id="GO:0098978">
    <property type="term" value="C:glutamatergic synapse"/>
    <property type="evidence" value="ECO:0000318"/>
    <property type="project" value="GO_Central"/>
</dbReference>
<dbReference type="GO" id="GO:0000139">
    <property type="term" value="C:Golgi membrane"/>
    <property type="evidence" value="ECO:0007669"/>
    <property type="project" value="UniProtKB-SubCell"/>
</dbReference>
<dbReference type="GO" id="GO:0005886">
    <property type="term" value="C:plasma membrane"/>
    <property type="evidence" value="ECO:0000318"/>
    <property type="project" value="GO_Central"/>
</dbReference>
<dbReference type="GO" id="GO:0042734">
    <property type="term" value="C:presynaptic membrane"/>
    <property type="evidence" value="ECO:0000318"/>
    <property type="project" value="GO_Central"/>
</dbReference>
<dbReference type="GO" id="GO:0001591">
    <property type="term" value="F:dopamine neurotransmitter receptor activity, coupled via Gi/Go"/>
    <property type="evidence" value="ECO:0000318"/>
    <property type="project" value="GO_Central"/>
</dbReference>
<dbReference type="GO" id="GO:0004930">
    <property type="term" value="F:G protein-coupled receptor activity"/>
    <property type="evidence" value="ECO:0000318"/>
    <property type="project" value="GO_Central"/>
</dbReference>
<dbReference type="GO" id="GO:0007195">
    <property type="term" value="P:adenylate cyclase-inhibiting dopamine receptor signaling pathway"/>
    <property type="evidence" value="ECO:0000318"/>
    <property type="project" value="GO_Central"/>
</dbReference>
<dbReference type="GO" id="GO:1990384">
    <property type="term" value="P:hyaloid vascular plexus regression"/>
    <property type="evidence" value="ECO:0000250"/>
    <property type="project" value="UniProtKB"/>
</dbReference>
<dbReference type="GO" id="GO:0051481">
    <property type="term" value="P:negative regulation of cytosolic calcium ion concentration"/>
    <property type="evidence" value="ECO:0000318"/>
    <property type="project" value="GO_Central"/>
</dbReference>
<dbReference type="GO" id="GO:0051967">
    <property type="term" value="P:negative regulation of synaptic transmission, glutamatergic"/>
    <property type="evidence" value="ECO:0000318"/>
    <property type="project" value="GO_Central"/>
</dbReference>
<dbReference type="GO" id="GO:0060158">
    <property type="term" value="P:phospholipase C-activating dopamine receptor signaling pathway"/>
    <property type="evidence" value="ECO:0000318"/>
    <property type="project" value="GO_Central"/>
</dbReference>
<dbReference type="GO" id="GO:0014059">
    <property type="term" value="P:regulation of dopamine secretion"/>
    <property type="evidence" value="ECO:0000318"/>
    <property type="project" value="GO_Central"/>
</dbReference>
<dbReference type="GO" id="GO:0043266">
    <property type="term" value="P:regulation of potassium ion transport"/>
    <property type="evidence" value="ECO:0000318"/>
    <property type="project" value="GO_Central"/>
</dbReference>
<dbReference type="CDD" id="cd15309">
    <property type="entry name" value="7tmA_D2_dopamine_R"/>
    <property type="match status" value="1"/>
</dbReference>
<dbReference type="FunFam" id="1.20.1070.10:FF:000099">
    <property type="entry name" value="D(2) dopamine receptor"/>
    <property type="match status" value="1"/>
</dbReference>
<dbReference type="FunFam" id="1.20.1070.10:FF:000086">
    <property type="entry name" value="Dopamine D2 receptor 2"/>
    <property type="match status" value="1"/>
</dbReference>
<dbReference type="Gene3D" id="1.20.1070.10">
    <property type="entry name" value="Rhodopsin 7-helix transmembrane proteins"/>
    <property type="match status" value="2"/>
</dbReference>
<dbReference type="InterPro" id="IPR001922">
    <property type="entry name" value="Dopamine_D2_rcpt"/>
</dbReference>
<dbReference type="InterPro" id="IPR000929">
    <property type="entry name" value="Dopamine_rcpt"/>
</dbReference>
<dbReference type="InterPro" id="IPR000276">
    <property type="entry name" value="GPCR_Rhodpsn"/>
</dbReference>
<dbReference type="InterPro" id="IPR017452">
    <property type="entry name" value="GPCR_Rhodpsn_7TM"/>
</dbReference>
<dbReference type="PANTHER" id="PTHR24248">
    <property type="entry name" value="ADRENERGIC RECEPTOR-RELATED G-PROTEIN COUPLED RECEPTOR"/>
    <property type="match status" value="1"/>
</dbReference>
<dbReference type="PANTHER" id="PTHR24248:SF87">
    <property type="entry name" value="D(2) DOPAMINE RECEPTOR"/>
    <property type="match status" value="1"/>
</dbReference>
<dbReference type="Pfam" id="PF00001">
    <property type="entry name" value="7tm_1"/>
    <property type="match status" value="1"/>
</dbReference>
<dbReference type="PRINTS" id="PR00567">
    <property type="entry name" value="DOPAMINED2R"/>
</dbReference>
<dbReference type="PRINTS" id="PR00242">
    <property type="entry name" value="DOPAMINER"/>
</dbReference>
<dbReference type="PRINTS" id="PR00237">
    <property type="entry name" value="GPCRRHODOPSN"/>
</dbReference>
<dbReference type="SMART" id="SM01381">
    <property type="entry name" value="7TM_GPCR_Srsx"/>
    <property type="match status" value="1"/>
</dbReference>
<dbReference type="SUPFAM" id="SSF81321">
    <property type="entry name" value="Family A G protein-coupled receptor-like"/>
    <property type="match status" value="1"/>
</dbReference>
<dbReference type="PROSITE" id="PS00237">
    <property type="entry name" value="G_PROTEIN_RECEP_F1_1"/>
    <property type="match status" value="1"/>
</dbReference>
<dbReference type="PROSITE" id="PS50262">
    <property type="entry name" value="G_PROTEIN_RECEP_F1_2"/>
    <property type="match status" value="1"/>
</dbReference>
<organism>
    <name type="scientific">Canis lupus familiaris</name>
    <name type="common">Dog</name>
    <name type="synonym">Canis familiaris</name>
    <dbReference type="NCBI Taxonomy" id="9615"/>
    <lineage>
        <taxon>Eukaryota</taxon>
        <taxon>Metazoa</taxon>
        <taxon>Chordata</taxon>
        <taxon>Craniata</taxon>
        <taxon>Vertebrata</taxon>
        <taxon>Euteleostomi</taxon>
        <taxon>Mammalia</taxon>
        <taxon>Eutheria</taxon>
        <taxon>Laurasiatheria</taxon>
        <taxon>Carnivora</taxon>
        <taxon>Caniformia</taxon>
        <taxon>Canidae</taxon>
        <taxon>Canis</taxon>
    </lineage>
</organism>
<protein>
    <recommendedName>
        <fullName>D(2) dopamine receptor</fullName>
    </recommendedName>
    <alternativeName>
        <fullName>Dopamine D2 receptor</fullName>
    </alternativeName>
</protein>
<accession>Q9GJU1</accession>
<proteinExistence type="evidence at transcript level"/>
<comment type="function">
    <text evidence="3 8">Dopamine receptor whose activity is mediated by G proteins which inhibit adenylyl cyclase (PubMed:11054572). Positively regulates postnatal regression of retinal hyaloid vessels via suppression of VEGFR2/KDR activity, downstream of OPN5 (By similarity).</text>
</comment>
<comment type="subunit">
    <text evidence="2 3 4">Forms homo- and heterooligomers with DRD4. The interaction with DRD4 may modulate agonist-induced downstream signaling. Interacts with CADPS and CADPS2 (By similarity). Interacts with GPRASP1, PPP1R9B and CLIC6. Interacts with ARRB2 (By similarity). Interacts with HTR2A (By similarity). Interacts with DRD1. Interacts with KCNA2 (By similarity).</text>
</comment>
<comment type="subcellular location">
    <subcellularLocation>
        <location evidence="2">Cell membrane</location>
        <topology evidence="5">Multi-pass membrane protein</topology>
    </subcellularLocation>
    <subcellularLocation>
        <location evidence="2">Golgi apparatus membrane</location>
        <topology evidence="5">Multi-pass membrane protein</topology>
    </subcellularLocation>
</comment>
<comment type="PTM">
    <text evidence="2">Palmitoylated. Palmitoylation which is required for proper localization to the plasma membrane and stability of the receptor could be carried on by ZDHHC4, ZDHHC3 and ZDHHC8.</text>
</comment>
<comment type="similarity">
    <text evidence="6">Belongs to the G-protein coupled receptor 1 family.</text>
</comment>
<evidence type="ECO:0000250" key="1"/>
<evidence type="ECO:0000250" key="2">
    <source>
        <dbReference type="UniProtKB" id="P14416"/>
    </source>
</evidence>
<evidence type="ECO:0000250" key="3">
    <source>
        <dbReference type="UniProtKB" id="P61168"/>
    </source>
</evidence>
<evidence type="ECO:0000250" key="4">
    <source>
        <dbReference type="UniProtKB" id="P61169"/>
    </source>
</evidence>
<evidence type="ECO:0000255" key="5"/>
<evidence type="ECO:0000255" key="6">
    <source>
        <dbReference type="PROSITE-ProRule" id="PRU00521"/>
    </source>
</evidence>
<evidence type="ECO:0000256" key="7">
    <source>
        <dbReference type="SAM" id="MobiDB-lite"/>
    </source>
</evidence>
<evidence type="ECO:0000269" key="8">
    <source>
    </source>
</evidence>
<sequence length="443" mass="50562">MDPLNLSWYDDDLESQNWSRPFNGSEGKPGKPHYNYYAMLLTLLIFIIVFGNVLVCMAVSREKALQTTTNYLIVSLAVADLLVATLVMPWVVYLEVVGEWKFSRIHCDIFVTLDVMMCTASILNLCAISIDRYTAVAMPMLYNTRYSSKRRVTVMIAIVWVLSFTISCPLLFGLNNTDQNECIIANPAFVVYSSIVSFYVPFIVTLLVYIKIYIVLRRRRKRVNTERSSRAFRANLKAPLKGNCTHPEDMKLCTVIMKSNGSFPVNRRRVEAARRAQELEMEMLSSTSPPERTRYSPIPPSHHQLTLPDPSHHGLHSTADSPAKPEKNGHAKDHPKIAKIFEIQSMPNGKTRTSLKTMSRRKLSQQKEKKATQMLAIVLGVFIICWLPFFITHILNIHCECNIPPVLYSAFTWLGYVNSAVNPIIYTTFNIEFRKAFLKILHC</sequence>
<reference key="1">
    <citation type="journal article" date="2000" name="Gene">
        <title>Genomic analysis and functional expression of canine dopamine D2 receptor.</title>
        <authorList>
            <person name="Myeong H."/>
            <person name="Jeoung D."/>
            <person name="Kim H."/>
            <person name="Ha J.H."/>
            <person name="Lee Y."/>
            <person name="Kim K.H."/>
            <person name="Park C."/>
            <person name="Kaang B."/>
        </authorList>
    </citation>
    <scope>NUCLEOTIDE SEQUENCE [GENOMIC DNA / MRNA]</scope>
    <scope>FUNCTION</scope>
</reference>
<gene>
    <name type="primary">DRD2</name>
</gene>
<name>DRD2_CANLF</name>
<keyword id="KW-1003">Cell membrane</keyword>
<keyword id="KW-1015">Disulfide bond</keyword>
<keyword id="KW-0297">G-protein coupled receptor</keyword>
<keyword id="KW-0325">Glycoprotein</keyword>
<keyword id="KW-0333">Golgi apparatus</keyword>
<keyword id="KW-0449">Lipoprotein</keyword>
<keyword id="KW-0472">Membrane</keyword>
<keyword id="KW-0564">Palmitate</keyword>
<keyword id="KW-0675">Receptor</keyword>
<keyword id="KW-1185">Reference proteome</keyword>
<keyword id="KW-0807">Transducer</keyword>
<keyword id="KW-0812">Transmembrane</keyword>
<keyword id="KW-1133">Transmembrane helix</keyword>